<reference key="1">
    <citation type="submission" date="2003-02" db="EMBL/GenBank/DDBJ databases">
        <title>Neuroglobin cDNA sequences of from the rainbow trout, Oncorhynchus mykiss.</title>
        <authorList>
            <person name="Rosner A."/>
            <person name="Milke C."/>
            <person name="Hankeln T."/>
            <person name="Burmester T."/>
        </authorList>
    </citation>
    <scope>NUCLEOTIDE SEQUENCE [MRNA]</scope>
</reference>
<name>NGB2_ONCMY</name>
<dbReference type="EC" id="1.7.-.-" evidence="2"/>
<dbReference type="EMBL" id="AJ547801">
    <property type="protein sequence ID" value="CAD68069.1"/>
    <property type="molecule type" value="mRNA"/>
</dbReference>
<dbReference type="RefSeq" id="NP_001117861.1">
    <property type="nucleotide sequence ID" value="NM_001124389.1"/>
</dbReference>
<dbReference type="SMR" id="P59743"/>
<dbReference type="Ensembl" id="ENSOMYT00000140979.1">
    <property type="protein sequence ID" value="ENSOMYP00000136328.1"/>
    <property type="gene ID" value="ENSOMYG00000053114.1"/>
</dbReference>
<dbReference type="GeneID" id="100136083"/>
<dbReference type="KEGG" id="omy:100136083"/>
<dbReference type="CTD" id="58157"/>
<dbReference type="GeneTree" id="ENSGT00510000048375"/>
<dbReference type="OrthoDB" id="436496at2759"/>
<dbReference type="Proteomes" id="UP000694395">
    <property type="component" value="Chromosome 25"/>
</dbReference>
<dbReference type="GO" id="GO:0005829">
    <property type="term" value="C:cytosol"/>
    <property type="evidence" value="ECO:0007669"/>
    <property type="project" value="UniProtKB-SubCell"/>
</dbReference>
<dbReference type="GO" id="GO:0005759">
    <property type="term" value="C:mitochondrial matrix"/>
    <property type="evidence" value="ECO:0007669"/>
    <property type="project" value="UniProtKB-SubCell"/>
</dbReference>
<dbReference type="GO" id="GO:0005092">
    <property type="term" value="F:GDP-dissociation inhibitor activity"/>
    <property type="evidence" value="ECO:0000250"/>
    <property type="project" value="UniProtKB"/>
</dbReference>
<dbReference type="GO" id="GO:0020037">
    <property type="term" value="F:heme binding"/>
    <property type="evidence" value="ECO:0007669"/>
    <property type="project" value="InterPro"/>
</dbReference>
<dbReference type="GO" id="GO:0046872">
    <property type="term" value="F:metal ion binding"/>
    <property type="evidence" value="ECO:0007669"/>
    <property type="project" value="UniProtKB-KW"/>
</dbReference>
<dbReference type="GO" id="GO:0098809">
    <property type="term" value="F:nitrite reductase activity"/>
    <property type="evidence" value="ECO:0000250"/>
    <property type="project" value="UniProtKB"/>
</dbReference>
<dbReference type="GO" id="GO:0019825">
    <property type="term" value="F:oxygen binding"/>
    <property type="evidence" value="ECO:0000250"/>
    <property type="project" value="UniProtKB"/>
</dbReference>
<dbReference type="GO" id="GO:0071456">
    <property type="term" value="P:cellular response to hypoxia"/>
    <property type="evidence" value="ECO:0000250"/>
    <property type="project" value="UniProtKB"/>
</dbReference>
<dbReference type="Gene3D" id="1.10.490.10">
    <property type="entry name" value="Globins"/>
    <property type="match status" value="1"/>
</dbReference>
<dbReference type="InterPro" id="IPR000971">
    <property type="entry name" value="Globin"/>
</dbReference>
<dbReference type="InterPro" id="IPR050532">
    <property type="entry name" value="Globin-like_OT"/>
</dbReference>
<dbReference type="InterPro" id="IPR009050">
    <property type="entry name" value="Globin-like_sf"/>
</dbReference>
<dbReference type="InterPro" id="IPR012292">
    <property type="entry name" value="Globin/Proto"/>
</dbReference>
<dbReference type="PANTHER" id="PTHR46458">
    <property type="entry name" value="BLR2807 PROTEIN"/>
    <property type="match status" value="1"/>
</dbReference>
<dbReference type="PANTHER" id="PTHR46458:SF19">
    <property type="entry name" value="NEUROGLOBIN"/>
    <property type="match status" value="1"/>
</dbReference>
<dbReference type="Pfam" id="PF00042">
    <property type="entry name" value="Globin"/>
    <property type="match status" value="1"/>
</dbReference>
<dbReference type="PRINTS" id="PR00188">
    <property type="entry name" value="PLANTGLOBIN"/>
</dbReference>
<dbReference type="SUPFAM" id="SSF46458">
    <property type="entry name" value="Globin-like"/>
    <property type="match status" value="1"/>
</dbReference>
<dbReference type="PROSITE" id="PS01033">
    <property type="entry name" value="GLOBIN"/>
    <property type="match status" value="1"/>
</dbReference>
<keyword id="KW-0963">Cytoplasm</keyword>
<keyword id="KW-0349">Heme</keyword>
<keyword id="KW-0408">Iron</keyword>
<keyword id="KW-0479">Metal-binding</keyword>
<keyword id="KW-0496">Mitochondrion</keyword>
<keyword id="KW-0560">Oxidoreductase</keyword>
<evidence type="ECO:0000250" key="1">
    <source>
        <dbReference type="UniProtKB" id="Q9ER97"/>
    </source>
</evidence>
<evidence type="ECO:0000250" key="2">
    <source>
        <dbReference type="UniProtKB" id="Q9NPG2"/>
    </source>
</evidence>
<evidence type="ECO:0000255" key="3">
    <source>
        <dbReference type="PROSITE-ProRule" id="PRU00238"/>
    </source>
</evidence>
<evidence type="ECO:0000305" key="4">
    <source ref="1"/>
</evidence>
<proteinExistence type="evidence at transcript level"/>
<sequence>MEKLTEKDKELIRGSWESLGKNKVPHGVVMFSRLFELEPALLNLFHYNTNCSPTQDCLSSPEFLDHVTKVMLVIDAAVSHLDDLHTLEDFLLNLGKKHQAVGVNTQSFAVVGESLLYMLQCSLGHGYTGPLRQAWLNMYTIVVAAMSRGWAKNGEHKTD</sequence>
<feature type="chain" id="PRO_0000053400" description="Neuroglobin-2">
    <location>
        <begin position="1"/>
        <end position="159"/>
    </location>
</feature>
<feature type="domain" description="Globin" evidence="3">
    <location>
        <begin position="3"/>
        <end position="151"/>
    </location>
</feature>
<feature type="binding site" description="distal binding residue; reversible" evidence="2 3">
    <location>
        <position position="66"/>
    </location>
    <ligand>
        <name>heme b</name>
        <dbReference type="ChEBI" id="CHEBI:60344"/>
    </ligand>
    <ligandPart>
        <name>Fe</name>
        <dbReference type="ChEBI" id="CHEBI:18248"/>
    </ligandPart>
</feature>
<feature type="binding site" description="proximal binding residue" evidence="2 3">
    <location>
        <position position="98"/>
    </location>
    <ligand>
        <name>heme b</name>
        <dbReference type="ChEBI" id="CHEBI:60344"/>
    </ligand>
    <ligandPart>
        <name>Fe</name>
        <dbReference type="ChEBI" id="CHEBI:18248"/>
    </ligandPart>
</feature>
<accession>P59743</accession>
<protein>
    <recommendedName>
        <fullName evidence="4">Neuroglobin-2</fullName>
    </recommendedName>
    <alternativeName>
        <fullName evidence="2">Nitrite reductase</fullName>
        <ecNumber evidence="2">1.7.-.-</ecNumber>
    </alternativeName>
</protein>
<gene>
    <name type="primary">ngb2</name>
</gene>
<organism>
    <name type="scientific">Oncorhynchus mykiss</name>
    <name type="common">Rainbow trout</name>
    <name type="synonym">Salmo gairdneri</name>
    <dbReference type="NCBI Taxonomy" id="8022"/>
    <lineage>
        <taxon>Eukaryota</taxon>
        <taxon>Metazoa</taxon>
        <taxon>Chordata</taxon>
        <taxon>Craniata</taxon>
        <taxon>Vertebrata</taxon>
        <taxon>Euteleostomi</taxon>
        <taxon>Actinopterygii</taxon>
        <taxon>Neopterygii</taxon>
        <taxon>Teleostei</taxon>
        <taxon>Protacanthopterygii</taxon>
        <taxon>Salmoniformes</taxon>
        <taxon>Salmonidae</taxon>
        <taxon>Salmoninae</taxon>
        <taxon>Oncorhynchus</taxon>
    </lineage>
</organism>
<comment type="function">
    <text evidence="2">Monomeric globin with a bis-histidyl six-coordinate heme-iron atom through which it can bind dioxygen, carbon monoxide and nitric oxide. Could help transport oxygen and increase its availability to the metabolically active neuronal tissues, though its low quantity in tissues as well as its high affinity for dioxygen, which may limit its oxygen-releasing ability, argue against it. The ferrous/deoxygenated form exhibits a nitrite reductase activity and it could produce nitric oxide which in turn inhibits cellular respiration in response to hypoxia. In its ferrous/deoxygenated state, it may also exhibit GDI (Guanine nucleotide Dissociation Inhibitor) activity toward heterotrimeric G-alpha proteins, thereby regulating signal transduction to facilitate neuroprotective responses in the wake of hypoxia and associated oxidative stress.</text>
</comment>
<comment type="catalytic activity">
    <reaction evidence="2">
        <text>Fe(III)-heme b-[protein] + nitric oxide + H2O = Fe(II)-heme b-[protein] + nitrite + 2 H(+)</text>
        <dbReference type="Rhea" id="RHEA:77711"/>
        <dbReference type="Rhea" id="RHEA-COMP:18975"/>
        <dbReference type="Rhea" id="RHEA-COMP:18976"/>
        <dbReference type="ChEBI" id="CHEBI:15377"/>
        <dbReference type="ChEBI" id="CHEBI:15378"/>
        <dbReference type="ChEBI" id="CHEBI:16301"/>
        <dbReference type="ChEBI" id="CHEBI:16480"/>
        <dbReference type="ChEBI" id="CHEBI:55376"/>
        <dbReference type="ChEBI" id="CHEBI:60344"/>
    </reaction>
    <physiologicalReaction direction="right-to-left" evidence="2">
        <dbReference type="Rhea" id="RHEA:77713"/>
    </physiologicalReaction>
</comment>
<comment type="subunit">
    <text evidence="1 2">Monomer (By similarity). Homodimers and homotetramers. Mainly monomeric but also detected as part of homodimers and homotetramers (By similarity).</text>
</comment>
<comment type="subcellular location">
    <subcellularLocation>
        <location evidence="1">Cytoplasm</location>
        <location evidence="1">Cytosol</location>
    </subcellularLocation>
    <subcellularLocation>
        <location evidence="1">Mitochondrion matrix</location>
    </subcellularLocation>
    <text evidence="1">Enriched in mitochondrial matrix upon oxygen-glucose deprivation.</text>
</comment>
<comment type="similarity">
    <text evidence="3">Belongs to the globin family.</text>
</comment>